<comment type="function">
    <text evidence="1">Nucleotidase that shows phosphatase activity on nucleoside 5'-monophosphates.</text>
</comment>
<comment type="catalytic activity">
    <reaction evidence="1">
        <text>a ribonucleoside 5'-phosphate + H2O = a ribonucleoside + phosphate</text>
        <dbReference type="Rhea" id="RHEA:12484"/>
        <dbReference type="ChEBI" id="CHEBI:15377"/>
        <dbReference type="ChEBI" id="CHEBI:18254"/>
        <dbReference type="ChEBI" id="CHEBI:43474"/>
        <dbReference type="ChEBI" id="CHEBI:58043"/>
        <dbReference type="EC" id="3.1.3.5"/>
    </reaction>
</comment>
<comment type="cofactor">
    <cofactor evidence="1">
        <name>a divalent metal cation</name>
        <dbReference type="ChEBI" id="CHEBI:60240"/>
    </cofactor>
    <text evidence="1">Binds 1 divalent metal cation per subunit.</text>
</comment>
<comment type="subcellular location">
    <subcellularLocation>
        <location evidence="1">Cytoplasm</location>
    </subcellularLocation>
</comment>
<comment type="similarity">
    <text evidence="1">Belongs to the SurE nucleotidase family.</text>
</comment>
<feature type="chain" id="PRO_1000092022" description="5'-nucleotidase SurE">
    <location>
        <begin position="1"/>
        <end position="258"/>
    </location>
</feature>
<feature type="binding site" evidence="1">
    <location>
        <position position="8"/>
    </location>
    <ligand>
        <name>a divalent metal cation</name>
        <dbReference type="ChEBI" id="CHEBI:60240"/>
    </ligand>
</feature>
<feature type="binding site" evidence="1">
    <location>
        <position position="9"/>
    </location>
    <ligand>
        <name>a divalent metal cation</name>
        <dbReference type="ChEBI" id="CHEBI:60240"/>
    </ligand>
</feature>
<feature type="binding site" evidence="1">
    <location>
        <position position="40"/>
    </location>
    <ligand>
        <name>a divalent metal cation</name>
        <dbReference type="ChEBI" id="CHEBI:60240"/>
    </ligand>
</feature>
<feature type="binding site" evidence="1">
    <location>
        <position position="93"/>
    </location>
    <ligand>
        <name>a divalent metal cation</name>
        <dbReference type="ChEBI" id="CHEBI:60240"/>
    </ligand>
</feature>
<gene>
    <name evidence="1" type="primary">surE</name>
    <name type="ordered locus">OCAR_6263</name>
    <name type="ordered locus">OCA5_c17690</name>
</gene>
<proteinExistence type="inferred from homology"/>
<reference key="1">
    <citation type="journal article" date="2008" name="J. Bacteriol.">
        <title>Genome sequence of the chemolithoautotrophic bacterium Oligotropha carboxidovorans OM5T.</title>
        <authorList>
            <person name="Paul D."/>
            <person name="Bridges S."/>
            <person name="Burgess S.C."/>
            <person name="Dandass Y."/>
            <person name="Lawrence M.L."/>
        </authorList>
    </citation>
    <scope>NUCLEOTIDE SEQUENCE [LARGE SCALE GENOMIC DNA]</scope>
    <source>
        <strain>ATCC 49405 / DSM 1227 / KCTC 32145 / OM5</strain>
    </source>
</reference>
<reference key="2">
    <citation type="journal article" date="2011" name="J. Bacteriol.">
        <title>Complete genome sequences of the chemolithoautotrophic Oligotropha carboxidovorans strains OM4 and OM5.</title>
        <authorList>
            <person name="Volland S."/>
            <person name="Rachinger M."/>
            <person name="Strittmatter A."/>
            <person name="Daniel R."/>
            <person name="Gottschalk G."/>
            <person name="Meyer O."/>
        </authorList>
    </citation>
    <scope>NUCLEOTIDE SEQUENCE [LARGE SCALE GENOMIC DNA]</scope>
    <source>
        <strain>ATCC 49405 / DSM 1227 / KCTC 32145 / OM5</strain>
    </source>
</reference>
<name>SURE_AFIC5</name>
<evidence type="ECO:0000255" key="1">
    <source>
        <dbReference type="HAMAP-Rule" id="MF_00060"/>
    </source>
</evidence>
<protein>
    <recommendedName>
        <fullName evidence="1">5'-nucleotidase SurE</fullName>
        <ecNumber evidence="1">3.1.3.5</ecNumber>
    </recommendedName>
    <alternativeName>
        <fullName evidence="1">Nucleoside 5'-monophosphate phosphohydrolase</fullName>
    </alternativeName>
</protein>
<organism>
    <name type="scientific">Afipia carboxidovorans (strain ATCC 49405 / DSM 1227 / KCTC 32145 / OM5)</name>
    <name type="common">Oligotropha carboxidovorans</name>
    <dbReference type="NCBI Taxonomy" id="504832"/>
    <lineage>
        <taxon>Bacteria</taxon>
        <taxon>Pseudomonadati</taxon>
        <taxon>Pseudomonadota</taxon>
        <taxon>Alphaproteobacteria</taxon>
        <taxon>Hyphomicrobiales</taxon>
        <taxon>Nitrobacteraceae</taxon>
        <taxon>Afipia</taxon>
    </lineage>
</organism>
<accession>B6JFP2</accession>
<accession>F8BSE2</accession>
<keyword id="KW-0963">Cytoplasm</keyword>
<keyword id="KW-0378">Hydrolase</keyword>
<keyword id="KW-0479">Metal-binding</keyword>
<keyword id="KW-0547">Nucleotide-binding</keyword>
<keyword id="KW-1185">Reference proteome</keyword>
<sequence length="258" mass="28046">MRVLCTNDDGVNAPGLKVIEEIADQLSDDVWIVAPELDQSGVSHSLSLNDPLRLREIGPRLFAVRGTPTDCVIMGSRHVLGDKQPNLVLSGVNKGRNVAEDVVYSGTIAGALEGTILGLPSFALSQEFGGPQNRDKPMWDVARAFGADVIRKVMSVGVPTDTVININFPACAPEEVKGVVVTRQGKRNQGFLRIDGHYDGRGNPYYWIGFEKFPVPDIPGEGTDLAALEGNYVSVTPLRLDRTDMRFSEQLANLFNTP</sequence>
<dbReference type="EC" id="3.1.3.5" evidence="1"/>
<dbReference type="EMBL" id="CP001196">
    <property type="protein sequence ID" value="ACI93376.1"/>
    <property type="molecule type" value="Genomic_DNA"/>
</dbReference>
<dbReference type="EMBL" id="CP002826">
    <property type="protein sequence ID" value="AEI06483.1"/>
    <property type="molecule type" value="Genomic_DNA"/>
</dbReference>
<dbReference type="RefSeq" id="WP_012563402.1">
    <property type="nucleotide sequence ID" value="NC_015684.1"/>
</dbReference>
<dbReference type="SMR" id="B6JFP2"/>
<dbReference type="STRING" id="504832.OCA5_c17690"/>
<dbReference type="KEGG" id="oca:OCAR_6263"/>
<dbReference type="KEGG" id="ocg:OCA5_c17690"/>
<dbReference type="PATRIC" id="fig|504832.7.peg.1893"/>
<dbReference type="eggNOG" id="COG0496">
    <property type="taxonomic scope" value="Bacteria"/>
</dbReference>
<dbReference type="HOGENOM" id="CLU_045192_1_2_5"/>
<dbReference type="OrthoDB" id="9780815at2"/>
<dbReference type="Proteomes" id="UP000007730">
    <property type="component" value="Chromosome"/>
</dbReference>
<dbReference type="GO" id="GO:0005737">
    <property type="term" value="C:cytoplasm"/>
    <property type="evidence" value="ECO:0007669"/>
    <property type="project" value="UniProtKB-SubCell"/>
</dbReference>
<dbReference type="GO" id="GO:0008254">
    <property type="term" value="F:3'-nucleotidase activity"/>
    <property type="evidence" value="ECO:0007669"/>
    <property type="project" value="TreeGrafter"/>
</dbReference>
<dbReference type="GO" id="GO:0008253">
    <property type="term" value="F:5'-nucleotidase activity"/>
    <property type="evidence" value="ECO:0007669"/>
    <property type="project" value="UniProtKB-UniRule"/>
</dbReference>
<dbReference type="GO" id="GO:0004309">
    <property type="term" value="F:exopolyphosphatase activity"/>
    <property type="evidence" value="ECO:0007669"/>
    <property type="project" value="TreeGrafter"/>
</dbReference>
<dbReference type="GO" id="GO:0046872">
    <property type="term" value="F:metal ion binding"/>
    <property type="evidence" value="ECO:0007669"/>
    <property type="project" value="UniProtKB-UniRule"/>
</dbReference>
<dbReference type="GO" id="GO:0000166">
    <property type="term" value="F:nucleotide binding"/>
    <property type="evidence" value="ECO:0007669"/>
    <property type="project" value="UniProtKB-KW"/>
</dbReference>
<dbReference type="FunFam" id="3.40.1210.10:FF:000001">
    <property type="entry name" value="5'/3'-nucleotidase SurE"/>
    <property type="match status" value="1"/>
</dbReference>
<dbReference type="Gene3D" id="3.40.1210.10">
    <property type="entry name" value="Survival protein SurE-like phosphatase/nucleotidase"/>
    <property type="match status" value="1"/>
</dbReference>
<dbReference type="HAMAP" id="MF_00060">
    <property type="entry name" value="SurE"/>
    <property type="match status" value="1"/>
</dbReference>
<dbReference type="InterPro" id="IPR030048">
    <property type="entry name" value="SurE"/>
</dbReference>
<dbReference type="InterPro" id="IPR002828">
    <property type="entry name" value="SurE-like_Pase/nucleotidase"/>
</dbReference>
<dbReference type="InterPro" id="IPR036523">
    <property type="entry name" value="SurE-like_sf"/>
</dbReference>
<dbReference type="NCBIfam" id="NF001490">
    <property type="entry name" value="PRK00346.1-4"/>
    <property type="match status" value="1"/>
</dbReference>
<dbReference type="NCBIfam" id="TIGR00087">
    <property type="entry name" value="surE"/>
    <property type="match status" value="1"/>
</dbReference>
<dbReference type="PANTHER" id="PTHR30457">
    <property type="entry name" value="5'-NUCLEOTIDASE SURE"/>
    <property type="match status" value="1"/>
</dbReference>
<dbReference type="PANTHER" id="PTHR30457:SF12">
    <property type="entry name" value="5'_3'-NUCLEOTIDASE SURE"/>
    <property type="match status" value="1"/>
</dbReference>
<dbReference type="Pfam" id="PF01975">
    <property type="entry name" value="SurE"/>
    <property type="match status" value="1"/>
</dbReference>
<dbReference type="SUPFAM" id="SSF64167">
    <property type="entry name" value="SurE-like"/>
    <property type="match status" value="1"/>
</dbReference>